<organism>
    <name type="scientific">Mus musculus</name>
    <name type="common">Mouse</name>
    <dbReference type="NCBI Taxonomy" id="10090"/>
    <lineage>
        <taxon>Eukaryota</taxon>
        <taxon>Metazoa</taxon>
        <taxon>Chordata</taxon>
        <taxon>Craniata</taxon>
        <taxon>Vertebrata</taxon>
        <taxon>Euteleostomi</taxon>
        <taxon>Mammalia</taxon>
        <taxon>Eutheria</taxon>
        <taxon>Euarchontoglires</taxon>
        <taxon>Glires</taxon>
        <taxon>Rodentia</taxon>
        <taxon>Myomorpha</taxon>
        <taxon>Muroidea</taxon>
        <taxon>Muridae</taxon>
        <taxon>Murinae</taxon>
        <taxon>Mus</taxon>
        <taxon>Mus</taxon>
    </lineage>
</organism>
<accession>Q60895</accession>
<accession>E9QLS5</accession>
<accession>Q8VFN2</accession>
<protein>
    <recommendedName>
        <fullName evidence="3">Olfactory receptor 8G50</fullName>
    </recommendedName>
    <alternativeName>
        <fullName evidence="4">Odorant receptor M93</fullName>
    </alternativeName>
    <alternativeName>
        <fullName>Olfactory receptor 150</fullName>
    </alternativeName>
    <alternativeName>
        <fullName evidence="4">Olfactory receptor 171-18</fullName>
    </alternativeName>
    <alternativeName>
        <fullName>Olfactory receptor 7I</fullName>
    </alternativeName>
</protein>
<gene>
    <name evidence="4" type="primary">Or8g50</name>
    <name evidence="4" type="synonym">Mor171-18</name>
    <name evidence="4" type="synonym">Olfr150</name>
    <name type="synonym">Olfr7</name>
</gene>
<reference key="1">
    <citation type="journal article" date="2002" name="Nat. Neurosci.">
        <title>The olfactory receptor gene superfamily of the mouse.</title>
        <authorList>
            <person name="Zhang X."/>
            <person name="Firestein S."/>
        </authorList>
    </citation>
    <scope>NUCLEOTIDE SEQUENCE [GENOMIC DNA]</scope>
</reference>
<reference key="2">
    <citation type="journal article" date="2002" name="Hum. Mol. Genet.">
        <title>Different evolutionary processes shaped the mouse and human olfactory receptor gene families.</title>
        <authorList>
            <person name="Young J.M."/>
            <person name="Friedman C."/>
            <person name="Williams E.M."/>
            <person name="Ross J.A."/>
            <person name="Tonnes-Priddy L."/>
            <person name="Trask B.J."/>
        </authorList>
    </citation>
    <scope>NUCLEOTIDE SEQUENCE [GENOMIC DNA]</scope>
</reference>
<reference key="3">
    <citation type="journal article" date="2002" name="Hum. Mol. Genet.">
        <authorList>
            <person name="Young J.M."/>
            <person name="Friedman C."/>
            <person name="Williams E.M."/>
            <person name="Ross J.A."/>
            <person name="Tonnes-Priddy L."/>
            <person name="Trask B.J."/>
        </authorList>
    </citation>
    <scope>ERRATUM OF PUBMED:11875048</scope>
</reference>
<reference key="4">
    <citation type="journal article" date="2009" name="PLoS Biol.">
        <title>Lineage-specific biology revealed by a finished genome assembly of the mouse.</title>
        <authorList>
            <person name="Church D.M."/>
            <person name="Goodstadt L."/>
            <person name="Hillier L.W."/>
            <person name="Zody M.C."/>
            <person name="Goldstein S."/>
            <person name="She X."/>
            <person name="Bult C.J."/>
            <person name="Agarwala R."/>
            <person name="Cherry J.L."/>
            <person name="DiCuccio M."/>
            <person name="Hlavina W."/>
            <person name="Kapustin Y."/>
            <person name="Meric P."/>
            <person name="Maglott D."/>
            <person name="Birtle Z."/>
            <person name="Marques A.C."/>
            <person name="Graves T."/>
            <person name="Zhou S."/>
            <person name="Teague B."/>
            <person name="Potamousis K."/>
            <person name="Churas C."/>
            <person name="Place M."/>
            <person name="Herschleb J."/>
            <person name="Runnheim R."/>
            <person name="Forrest D."/>
            <person name="Amos-Landgraf J."/>
            <person name="Schwartz D.C."/>
            <person name="Cheng Z."/>
            <person name="Lindblad-Toh K."/>
            <person name="Eichler E.E."/>
            <person name="Ponting C.P."/>
        </authorList>
    </citation>
    <scope>NUCLEOTIDE SEQUENCE [LARGE SCALE GENOMIC DNA]</scope>
    <source>
        <strain>C57BL/6J</strain>
    </source>
</reference>
<reference key="5">
    <citation type="journal article" date="1996" name="Proc. Natl. Acad. Sci. U.S.A.">
        <title>The chromosomal distribution of mouse odorant receptor genes.</title>
        <authorList>
            <person name="Sullivan S.L."/>
            <person name="Adamson M.C."/>
            <person name="Ressler K.J."/>
            <person name="Kozak C.A."/>
            <person name="Buck L.B."/>
        </authorList>
    </citation>
    <scope>NUCLEOTIDE SEQUENCE [GENOMIC DNA] OF 128-239</scope>
    <source>
        <strain>C57BL/6J</strain>
    </source>
</reference>
<name>O8G50_MOUSE</name>
<sequence length="312" mass="35457">MAYSNQSRVTEFIISGLTNKPELQLPLFLLFLGIYLFTVLGNLGMIILILLSSHLHTPMYFFLSSLSFIDLCYSTIITPKMLVNFVTTKNVISYQECMTQLYFFIAFVISECHMLAAMAYDRYVAICNPLLYNVTMSYQVCSWMVGGVYGMGFIGAAIHTFCMLRVVFCKDNIINHYFCDLFPLMELACSSTYVNEVVLLSLSAFNIFIPTLTILGSYIFIIISILRIKSTEGRFKAFSTCSSHFSAVSVFFGSLAFMYLQPFSVSSKDKGKVSSVFYTTIVPMLNPMIYSLRNRDVKLALNKLFQKKKFHV</sequence>
<dbReference type="EMBL" id="AY073488">
    <property type="protein sequence ID" value="AAL61151.1"/>
    <property type="molecule type" value="Genomic_DNA"/>
</dbReference>
<dbReference type="EMBL" id="AY318160">
    <property type="protein sequence ID" value="AAP71429.1"/>
    <property type="molecule type" value="Genomic_DNA"/>
</dbReference>
<dbReference type="EMBL" id="CT025612">
    <property type="status" value="NOT_ANNOTATED_CDS"/>
    <property type="molecule type" value="Genomic_DNA"/>
</dbReference>
<dbReference type="EMBL" id="U28784">
    <property type="protein sequence ID" value="AAC52407.1"/>
    <property type="molecule type" value="Genomic_DNA"/>
</dbReference>
<dbReference type="CCDS" id="CCDS52773.1"/>
<dbReference type="RefSeq" id="NP_666820.2">
    <property type="nucleotide sequence ID" value="NM_146609.2"/>
</dbReference>
<dbReference type="SMR" id="Q60895"/>
<dbReference type="FunCoup" id="Q60895">
    <property type="interactions" value="1168"/>
</dbReference>
<dbReference type="STRING" id="10090.ENSMUSP00000150024"/>
<dbReference type="GlyCosmos" id="Q60895">
    <property type="glycosylation" value="1 site, No reported glycans"/>
</dbReference>
<dbReference type="GlyGen" id="Q60895">
    <property type="glycosylation" value="1 site"/>
</dbReference>
<dbReference type="iPTMnet" id="Q60895"/>
<dbReference type="PhosphoSitePlus" id="Q60895"/>
<dbReference type="PaxDb" id="10090-ENSMUSP00000077635"/>
<dbReference type="Ensembl" id="ENSMUST00000078557.2">
    <property type="protein sequence ID" value="ENSMUSP00000077635.2"/>
    <property type="gene ID" value="ENSMUSG00000094353.3"/>
</dbReference>
<dbReference type="Ensembl" id="ENSMUST00000217257.2">
    <property type="protein sequence ID" value="ENSMUSP00000150024.2"/>
    <property type="gene ID" value="ENSMUSG00000094353.3"/>
</dbReference>
<dbReference type="GeneID" id="258602"/>
<dbReference type="KEGG" id="mmu:258602"/>
<dbReference type="UCSC" id="uc012grg.1">
    <property type="organism name" value="mouse"/>
</dbReference>
<dbReference type="AGR" id="MGI:2659178"/>
<dbReference type="CTD" id="258602"/>
<dbReference type="MGI" id="MGI:2659178">
    <property type="gene designation" value="Or8g50"/>
</dbReference>
<dbReference type="VEuPathDB" id="HostDB:ENSMUSG00000094353"/>
<dbReference type="eggNOG" id="ENOG502SJS1">
    <property type="taxonomic scope" value="Eukaryota"/>
</dbReference>
<dbReference type="GeneTree" id="ENSGT01040000240383"/>
<dbReference type="HOGENOM" id="CLU_012526_1_0_1"/>
<dbReference type="InParanoid" id="Q60895"/>
<dbReference type="OMA" id="LIERWIG"/>
<dbReference type="OrthoDB" id="9613420at2759"/>
<dbReference type="PhylomeDB" id="Q60895"/>
<dbReference type="TreeFam" id="TF352753"/>
<dbReference type="BioGRID-ORCS" id="258602">
    <property type="hits" value="4 hits in 51 CRISPR screens"/>
</dbReference>
<dbReference type="PRO" id="PR:Q60895"/>
<dbReference type="Proteomes" id="UP000000589">
    <property type="component" value="Chromosome 9"/>
</dbReference>
<dbReference type="RNAct" id="Q60895">
    <property type="molecule type" value="protein"/>
</dbReference>
<dbReference type="Bgee" id="ENSMUSG00000094353">
    <property type="expression patterns" value="Expressed in olfactory bulb"/>
</dbReference>
<dbReference type="GO" id="GO:0016020">
    <property type="term" value="C:membrane"/>
    <property type="evidence" value="ECO:0000247"/>
    <property type="project" value="MGI"/>
</dbReference>
<dbReference type="GO" id="GO:0005886">
    <property type="term" value="C:plasma membrane"/>
    <property type="evidence" value="ECO:0007669"/>
    <property type="project" value="UniProtKB-SubCell"/>
</dbReference>
<dbReference type="GO" id="GO:0004930">
    <property type="term" value="F:G protein-coupled receptor activity"/>
    <property type="evidence" value="ECO:0007669"/>
    <property type="project" value="UniProtKB-KW"/>
</dbReference>
<dbReference type="GO" id="GO:0004984">
    <property type="term" value="F:olfactory receptor activity"/>
    <property type="evidence" value="ECO:0000247"/>
    <property type="project" value="MGI"/>
</dbReference>
<dbReference type="GO" id="GO:0007186">
    <property type="term" value="P:G protein-coupled receptor signaling pathway"/>
    <property type="evidence" value="ECO:0000247"/>
    <property type="project" value="MGI"/>
</dbReference>
<dbReference type="GO" id="GO:0007608">
    <property type="term" value="P:sensory perception of smell"/>
    <property type="evidence" value="ECO:0000247"/>
    <property type="project" value="MGI"/>
</dbReference>
<dbReference type="FunFam" id="1.20.1070.10:FF:000004">
    <property type="entry name" value="Olfactory receptor"/>
    <property type="match status" value="1"/>
</dbReference>
<dbReference type="Gene3D" id="1.20.1070.10">
    <property type="entry name" value="Rhodopsin 7-helix transmembrane proteins"/>
    <property type="match status" value="1"/>
</dbReference>
<dbReference type="InterPro" id="IPR000276">
    <property type="entry name" value="GPCR_Rhodpsn"/>
</dbReference>
<dbReference type="InterPro" id="IPR017452">
    <property type="entry name" value="GPCR_Rhodpsn_7TM"/>
</dbReference>
<dbReference type="InterPro" id="IPR000725">
    <property type="entry name" value="Olfact_rcpt"/>
</dbReference>
<dbReference type="PANTHER" id="PTHR48018">
    <property type="entry name" value="OLFACTORY RECEPTOR"/>
    <property type="match status" value="1"/>
</dbReference>
<dbReference type="Pfam" id="PF13853">
    <property type="entry name" value="7tm_4"/>
    <property type="match status" value="1"/>
</dbReference>
<dbReference type="PRINTS" id="PR00237">
    <property type="entry name" value="GPCRRHODOPSN"/>
</dbReference>
<dbReference type="PRINTS" id="PR00245">
    <property type="entry name" value="OLFACTORYR"/>
</dbReference>
<dbReference type="SUPFAM" id="SSF81321">
    <property type="entry name" value="Family A G protein-coupled receptor-like"/>
    <property type="match status" value="1"/>
</dbReference>
<dbReference type="PROSITE" id="PS00237">
    <property type="entry name" value="G_PROTEIN_RECEP_F1_1"/>
    <property type="match status" value="1"/>
</dbReference>
<dbReference type="PROSITE" id="PS50262">
    <property type="entry name" value="G_PROTEIN_RECEP_F1_2"/>
    <property type="match status" value="1"/>
</dbReference>
<comment type="function">
    <text evidence="3">Odorant receptor.</text>
</comment>
<comment type="subcellular location">
    <subcellularLocation>
        <location evidence="3">Cell membrane</location>
        <topology evidence="1">Multi-pass membrane protein</topology>
    </subcellularLocation>
</comment>
<comment type="similarity">
    <text evidence="2">Belongs to the G-protein coupled receptor 1 family.</text>
</comment>
<proteinExistence type="inferred from homology"/>
<keyword id="KW-1003">Cell membrane</keyword>
<keyword id="KW-1015">Disulfide bond</keyword>
<keyword id="KW-0297">G-protein coupled receptor</keyword>
<keyword id="KW-0325">Glycoprotein</keyword>
<keyword id="KW-0472">Membrane</keyword>
<keyword id="KW-0552">Olfaction</keyword>
<keyword id="KW-0675">Receptor</keyword>
<keyword id="KW-1185">Reference proteome</keyword>
<keyword id="KW-0716">Sensory transduction</keyword>
<keyword id="KW-0807">Transducer</keyword>
<keyword id="KW-0812">Transmembrane</keyword>
<keyword id="KW-1133">Transmembrane helix</keyword>
<feature type="chain" id="PRO_0000150827" description="Olfactory receptor 8G50">
    <location>
        <begin position="1"/>
        <end position="312"/>
    </location>
</feature>
<feature type="topological domain" description="Extracellular" evidence="1">
    <location>
        <begin position="1"/>
        <end position="28"/>
    </location>
</feature>
<feature type="transmembrane region" description="Helical; Name=1" evidence="1">
    <location>
        <begin position="29"/>
        <end position="49"/>
    </location>
</feature>
<feature type="topological domain" description="Cytoplasmic" evidence="1">
    <location>
        <begin position="50"/>
        <end position="56"/>
    </location>
</feature>
<feature type="transmembrane region" description="Helical; Name=2" evidence="1">
    <location>
        <begin position="57"/>
        <end position="77"/>
    </location>
</feature>
<feature type="topological domain" description="Extracellular" evidence="1">
    <location>
        <begin position="78"/>
        <end position="99"/>
    </location>
</feature>
<feature type="transmembrane region" description="Helical; Name=3" evidence="1">
    <location>
        <begin position="100"/>
        <end position="120"/>
    </location>
</feature>
<feature type="topological domain" description="Cytoplasmic" evidence="1">
    <location>
        <begin position="121"/>
        <end position="143"/>
    </location>
</feature>
<feature type="transmembrane region" description="Helical; Name=4" evidence="1">
    <location>
        <begin position="144"/>
        <end position="164"/>
    </location>
</feature>
<feature type="topological domain" description="Extracellular" evidence="1">
    <location>
        <begin position="165"/>
        <end position="204"/>
    </location>
</feature>
<feature type="transmembrane region" description="Helical; Name=5" evidence="1">
    <location>
        <begin position="205"/>
        <end position="225"/>
    </location>
</feature>
<feature type="topological domain" description="Cytoplasmic" evidence="1">
    <location>
        <begin position="226"/>
        <end position="244"/>
    </location>
</feature>
<feature type="transmembrane region" description="Helical; Name=6" evidence="1">
    <location>
        <begin position="245"/>
        <end position="265"/>
    </location>
</feature>
<feature type="topological domain" description="Extracellular" evidence="1">
    <location>
        <begin position="266"/>
        <end position="274"/>
    </location>
</feature>
<feature type="transmembrane region" description="Helical; Name=7" evidence="1">
    <location>
        <begin position="275"/>
        <end position="292"/>
    </location>
</feature>
<feature type="topological domain" description="Cytoplasmic" evidence="1">
    <location>
        <begin position="293"/>
        <end position="312"/>
    </location>
</feature>
<feature type="glycosylation site" description="N-linked (GlcNAc...) asparagine" evidence="1">
    <location>
        <position position="5"/>
    </location>
</feature>
<feature type="disulfide bond" evidence="2">
    <location>
        <begin position="97"/>
        <end position="189"/>
    </location>
</feature>
<feature type="sequence conflict" description="In Ref. 1; AAL61151 and 2; AAP71429." evidence="3" ref="1 2">
    <original>S</original>
    <variation>A</variation>
    <location>
        <position position="15"/>
    </location>
</feature>
<evidence type="ECO:0000255" key="1"/>
<evidence type="ECO:0000255" key="2">
    <source>
        <dbReference type="PROSITE-ProRule" id="PRU00521"/>
    </source>
</evidence>
<evidence type="ECO:0000305" key="3"/>
<evidence type="ECO:0000312" key="4">
    <source>
        <dbReference type="MGI" id="MGI:2659178"/>
    </source>
</evidence>